<sequence length="317" mass="34675">MDFEASAKILTTPVKGAKIVSNMTVDELVREYAGCAFGAGRLAKAVDIYYEMLASEKTTKFFGLAGAMTPAGMRNIIADLIRDGYIDVLVTTGANMVHDTVEALGLHHYKGSDCTNDIQLRHECIDRIYDVYLPDQHFTDLEEFLQGVYAGLPQEKLSIRQVLTEIGKNLDDDSSILKTAAEMGVPVYCPALQDSVIGLQAWLYKEGNPLHVDAFADMHEFMEICFETESAGAMLLGGGVPKNYILQSMLVTPRSFDYAIQLTMDHPETGGLSGATLDEAQSWGKVGENAKSVTVYADSTITLPLIVSAVRTRLSKR</sequence>
<organism>
    <name type="scientific">Methanosarcina thermophila</name>
    <dbReference type="NCBI Taxonomy" id="2210"/>
    <lineage>
        <taxon>Archaea</taxon>
        <taxon>Methanobacteriati</taxon>
        <taxon>Methanobacteriota</taxon>
        <taxon>Stenosarchaea group</taxon>
        <taxon>Methanomicrobia</taxon>
        <taxon>Methanosarcinales</taxon>
        <taxon>Methanosarcinaceae</taxon>
        <taxon>Methanosarcina</taxon>
    </lineage>
</organism>
<name>DHYS_METTE</name>
<protein>
    <recommendedName>
        <fullName>Probable deoxyhypusine synthase</fullName>
        <shortName>DHS</shortName>
        <ecNumber>2.5.1.46</ecNumber>
    </recommendedName>
</protein>
<reference key="1">
    <citation type="submission" date="2001-03" db="EMBL/GenBank/DDBJ databases">
        <title>A putative pyrF gene cloned from Methanosarcina thermophila.</title>
        <authorList>
            <person name="Apolinario-Smith E.E."/>
            <person name="Sowers K.R."/>
        </authorList>
    </citation>
    <scope>NUCLEOTIDE SEQUENCE [GENOMIC DNA]</scope>
</reference>
<feature type="chain" id="PRO_0000134499" description="Probable deoxyhypusine synthase">
    <location>
        <begin position="1"/>
        <end position="317"/>
    </location>
</feature>
<feature type="active site" description="Nucleophile" evidence="1">
    <location>
        <position position="285"/>
    </location>
</feature>
<proteinExistence type="inferred from homology"/>
<gene>
    <name type="primary">dys</name>
    <name type="synonym">dhs</name>
</gene>
<accession>Q977X6</accession>
<evidence type="ECO:0000250" key="1"/>
<evidence type="ECO:0000305" key="2"/>
<comment type="function">
    <text evidence="1">Catalyzes the NAD-dependent oxidative cleavage of spermidine and the subsequent transfer of the butylamine moiety of spermidine to the epsilon-amino group of a specific lysine residue of the eIF-5A precursor protein to form the intermediate deoxyhypusine residue.</text>
</comment>
<comment type="catalytic activity">
    <reaction>
        <text>[eIF5A protein]-L-lysine + spermidine = [eIF5A protein]-deoxyhypusine + propane-1,3-diamine</text>
        <dbReference type="Rhea" id="RHEA:33299"/>
        <dbReference type="Rhea" id="RHEA-COMP:10143"/>
        <dbReference type="Rhea" id="RHEA-COMP:10144"/>
        <dbReference type="ChEBI" id="CHEBI:29969"/>
        <dbReference type="ChEBI" id="CHEBI:57484"/>
        <dbReference type="ChEBI" id="CHEBI:57834"/>
        <dbReference type="ChEBI" id="CHEBI:82657"/>
        <dbReference type="EC" id="2.5.1.46"/>
    </reaction>
</comment>
<comment type="cofactor">
    <cofactor evidence="1">
        <name>NAD(+)</name>
        <dbReference type="ChEBI" id="CHEBI:57540"/>
    </cofactor>
</comment>
<comment type="pathway">
    <text>Protein modification; eIF5A hypusination.</text>
</comment>
<comment type="similarity">
    <text evidence="2">Belongs to the deoxyhypusine synthase family.</text>
</comment>
<comment type="sequence caution" evidence="2">
    <conflict type="frameshift">
        <sequence resource="EMBL-CDS" id="AAK49974"/>
    </conflict>
</comment>
<keyword id="KW-0386">Hypusine biosynthesis</keyword>
<keyword id="KW-0520">NAD</keyword>
<keyword id="KW-0808">Transferase</keyword>
<dbReference type="EC" id="2.5.1.46"/>
<dbReference type="EMBL" id="AF358260">
    <property type="protein sequence ID" value="AAK49974.1"/>
    <property type="status" value="ALT_FRAME"/>
    <property type="molecule type" value="Genomic_DNA"/>
</dbReference>
<dbReference type="SMR" id="Q977X6"/>
<dbReference type="UniPathway" id="UPA00354"/>
<dbReference type="GO" id="GO:0005737">
    <property type="term" value="C:cytoplasm"/>
    <property type="evidence" value="ECO:0007669"/>
    <property type="project" value="TreeGrafter"/>
</dbReference>
<dbReference type="GO" id="GO:0034038">
    <property type="term" value="F:deoxyhypusine synthase activity"/>
    <property type="evidence" value="ECO:0007669"/>
    <property type="project" value="UniProtKB-UniRule"/>
</dbReference>
<dbReference type="FunFam" id="3.40.910.10:FF:000012">
    <property type="entry name" value="Probable deoxyhypusine synthase"/>
    <property type="match status" value="1"/>
</dbReference>
<dbReference type="Gene3D" id="3.40.910.10">
    <property type="entry name" value="Deoxyhypusine synthase"/>
    <property type="match status" value="1"/>
</dbReference>
<dbReference type="HAMAP" id="MF_00153">
    <property type="entry name" value="DHS"/>
    <property type="match status" value="1"/>
</dbReference>
<dbReference type="InterPro" id="IPR022899">
    <property type="entry name" value="Deoxyhypus_synthase_arc"/>
</dbReference>
<dbReference type="InterPro" id="IPR002773">
    <property type="entry name" value="Deoxyhypusine_synthase"/>
</dbReference>
<dbReference type="InterPro" id="IPR036982">
    <property type="entry name" value="Deoxyhypusine_synthase_sf"/>
</dbReference>
<dbReference type="InterPro" id="IPR029035">
    <property type="entry name" value="DHS-like_NAD/FAD-binding_dom"/>
</dbReference>
<dbReference type="NCBIfam" id="TIGR00321">
    <property type="entry name" value="dhys"/>
    <property type="match status" value="1"/>
</dbReference>
<dbReference type="NCBIfam" id="NF002630">
    <property type="entry name" value="PRK02301.1"/>
    <property type="match status" value="1"/>
</dbReference>
<dbReference type="PANTHER" id="PTHR11703">
    <property type="entry name" value="DEOXYHYPUSINE SYNTHASE"/>
    <property type="match status" value="1"/>
</dbReference>
<dbReference type="PANTHER" id="PTHR11703:SF2">
    <property type="entry name" value="DEOXYHYPUSINE SYNTHASE-LIKE PROTEIN"/>
    <property type="match status" value="1"/>
</dbReference>
<dbReference type="Pfam" id="PF01916">
    <property type="entry name" value="DS"/>
    <property type="match status" value="1"/>
</dbReference>
<dbReference type="SUPFAM" id="SSF52467">
    <property type="entry name" value="DHS-like NAD/FAD-binding domain"/>
    <property type="match status" value="1"/>
</dbReference>